<organism>
    <name type="scientific">Drosophila melanogaster</name>
    <name type="common">Fruit fly</name>
    <dbReference type="NCBI Taxonomy" id="7227"/>
    <lineage>
        <taxon>Eukaryota</taxon>
        <taxon>Metazoa</taxon>
        <taxon>Ecdysozoa</taxon>
        <taxon>Arthropoda</taxon>
        <taxon>Hexapoda</taxon>
        <taxon>Insecta</taxon>
        <taxon>Pterygota</taxon>
        <taxon>Neoptera</taxon>
        <taxon>Endopterygota</taxon>
        <taxon>Diptera</taxon>
        <taxon>Brachycera</taxon>
        <taxon>Muscomorpha</taxon>
        <taxon>Ephydroidea</taxon>
        <taxon>Drosophilidae</taxon>
        <taxon>Drosophila</taxon>
        <taxon>Sophophora</taxon>
    </lineage>
</organism>
<protein>
    <recommendedName>
        <fullName>Furin-like protease 1, isoforms 1/1-X/2</fullName>
        <shortName>Furin-1</shortName>
        <ecNumber>3.4.21.75</ecNumber>
    </recommendedName>
    <alternativeName>
        <fullName>Kex2-like endoprotease 1</fullName>
    </alternativeName>
    <alternativeName>
        <fullName>dKLIP-1</fullName>
    </alternativeName>
</protein>
<comment type="function">
    <text evidence="1">Furin is likely to represent the ubiquitous endoprotease activity within constitutive secretory pathways and capable of cleavage at the RX(K/R)R consensus motif.</text>
</comment>
<comment type="catalytic activity">
    <reaction>
        <text>Release of mature proteins from their proproteins by cleavage of -Arg-Xaa-Yaa-Arg-|-Zaa- bonds, where Xaa can be any amino acid and Yaa is Arg or Lys. Releases albumin, complement component C3 and von Willebrand factor from their respective precursors.</text>
        <dbReference type="EC" id="3.4.21.75"/>
    </reaction>
</comment>
<comment type="cofactor">
    <cofactor evidence="1">
        <name>Ca(2+)</name>
        <dbReference type="ChEBI" id="CHEBI:29108"/>
    </cofactor>
</comment>
<comment type="subcellular location">
    <subcellularLocation>
        <location evidence="6">Golgi apparatus membrane</location>
        <topology evidence="6">Multi-pass membrane protein</topology>
    </subcellularLocation>
</comment>
<comment type="alternative products">
    <event type="alternative splicing"/>
    <isoform>
        <id>P26016-1</id>
        <name>1-X</name>
        <name>E</name>
        <sequence type="displayed"/>
    </isoform>
    <isoform>
        <id>P26016-2</id>
        <name>1</name>
        <name>F</name>
        <sequence type="described" ref="VSP_005424 VSP_008042"/>
    </isoform>
    <isoform>
        <id>P26016-3</id>
        <name>2</name>
        <name>C</name>
        <name>D</name>
        <name>F</name>
        <sequence type="described" ref="VSP_005424"/>
    </isoform>
    <isoform>
        <id>P30430-1</id>
        <name>1-CRR</name>
        <name>A</name>
        <sequence type="external"/>
    </isoform>
</comment>
<comment type="tissue specificity">
    <text evidence="6">In adults, isoform 1-X is expressed in CNS, fat body and female reproductive tissues, and in embryos, in CNS, tracheal pits, hindgut, posterior spiracles and anal pads.</text>
</comment>
<comment type="developmental stage">
    <text evidence="6">Isoforms 1-X and 2 are expressed in embryos, larvae, pupae and adults. Highest expression is in late embryos.</text>
</comment>
<comment type="similarity">
    <text evidence="9">Belongs to the peptidase S8 family. Furin subfamily.</text>
</comment>
<keyword id="KW-0025">Alternative splicing</keyword>
<keyword id="KW-0165">Cleavage on pair of basic residues</keyword>
<keyword id="KW-1015">Disulfide bond</keyword>
<keyword id="KW-0325">Glycoprotein</keyword>
<keyword id="KW-0333">Golgi apparatus</keyword>
<keyword id="KW-0378">Hydrolase</keyword>
<keyword id="KW-0472">Membrane</keyword>
<keyword id="KW-0645">Protease</keyword>
<keyword id="KW-1185">Reference proteome</keyword>
<keyword id="KW-0720">Serine protease</keyword>
<keyword id="KW-0732">Signal</keyword>
<keyword id="KW-0812">Transmembrane</keyword>
<keyword id="KW-1133">Transmembrane helix</keyword>
<keyword id="KW-0865">Zymogen</keyword>
<reference key="1">
    <citation type="journal article" date="1991" name="FEBS Lett.">
        <title>cDNA sequence of a Drosophila melanogaster gene, Dfur1, encoding a protein structurally related to the subtilisin-like proprotein processing enzyme furin.</title>
        <authorList>
            <person name="Roebroek A.J.M."/>
            <person name="Pauli I.G.L."/>
            <person name="Zhang Y."/>
            <person name="van de Ven W.J.M."/>
        </authorList>
    </citation>
    <scope>NUCLEOTIDE SEQUENCE [MRNA] (ISOFORM 1)</scope>
    <source>
        <strain>Oregon-R</strain>
        <tissue>Embryo</tissue>
    </source>
</reference>
<reference key="2">
    <citation type="journal article" date="1993" name="EMBO J.">
        <title>Generation of structural and functional diversity in furin-like proteins in Drosophila melanogaster by alternative splicing of the DFur1 gene.</title>
        <authorList>
            <person name="Roebroek A.J.M."/>
            <person name="Creemers J.W.M."/>
            <person name="Pauli I.G.L."/>
            <person name="Bogaert T."/>
            <person name="Van de Ven W.J.M."/>
        </authorList>
    </citation>
    <scope>NUCLEOTIDE SEQUENCE [GENOMIC DNA]</scope>
    <scope>ALTERNATIVE SPLICING (ISOFORMS 1-X AND 2)</scope>
    <scope>SUBCELLULAR LOCATION</scope>
    <scope>TISSUE SPECIFICITY</scope>
    <scope>DEVELOPMENTAL STAGE</scope>
    <source>
        <strain>Oregon-R</strain>
        <strain>Tuebingen</strain>
        <tissue>Embryo</tissue>
    </source>
</reference>
<reference key="3">
    <citation type="journal article" date="2000" name="Science">
        <title>The genome sequence of Drosophila melanogaster.</title>
        <authorList>
            <person name="Adams M.D."/>
            <person name="Celniker S.E."/>
            <person name="Holt R.A."/>
            <person name="Evans C.A."/>
            <person name="Gocayne J.D."/>
            <person name="Amanatides P.G."/>
            <person name="Scherer S.E."/>
            <person name="Li P.W."/>
            <person name="Hoskins R.A."/>
            <person name="Galle R.F."/>
            <person name="George R.A."/>
            <person name="Lewis S.E."/>
            <person name="Richards S."/>
            <person name="Ashburner M."/>
            <person name="Henderson S.N."/>
            <person name="Sutton G.G."/>
            <person name="Wortman J.R."/>
            <person name="Yandell M.D."/>
            <person name="Zhang Q."/>
            <person name="Chen L.X."/>
            <person name="Brandon R.C."/>
            <person name="Rogers Y.-H.C."/>
            <person name="Blazej R.G."/>
            <person name="Champe M."/>
            <person name="Pfeiffer B.D."/>
            <person name="Wan K.H."/>
            <person name="Doyle C."/>
            <person name="Baxter E.G."/>
            <person name="Helt G."/>
            <person name="Nelson C.R."/>
            <person name="Miklos G.L.G."/>
            <person name="Abril J.F."/>
            <person name="Agbayani A."/>
            <person name="An H.-J."/>
            <person name="Andrews-Pfannkoch C."/>
            <person name="Baldwin D."/>
            <person name="Ballew R.M."/>
            <person name="Basu A."/>
            <person name="Baxendale J."/>
            <person name="Bayraktaroglu L."/>
            <person name="Beasley E.M."/>
            <person name="Beeson K.Y."/>
            <person name="Benos P.V."/>
            <person name="Berman B.P."/>
            <person name="Bhandari D."/>
            <person name="Bolshakov S."/>
            <person name="Borkova D."/>
            <person name="Botchan M.R."/>
            <person name="Bouck J."/>
            <person name="Brokstein P."/>
            <person name="Brottier P."/>
            <person name="Burtis K.C."/>
            <person name="Busam D.A."/>
            <person name="Butler H."/>
            <person name="Cadieu E."/>
            <person name="Center A."/>
            <person name="Chandra I."/>
            <person name="Cherry J.M."/>
            <person name="Cawley S."/>
            <person name="Dahlke C."/>
            <person name="Davenport L.B."/>
            <person name="Davies P."/>
            <person name="de Pablos B."/>
            <person name="Delcher A."/>
            <person name="Deng Z."/>
            <person name="Mays A.D."/>
            <person name="Dew I."/>
            <person name="Dietz S.M."/>
            <person name="Dodson K."/>
            <person name="Doup L.E."/>
            <person name="Downes M."/>
            <person name="Dugan-Rocha S."/>
            <person name="Dunkov B.C."/>
            <person name="Dunn P."/>
            <person name="Durbin K.J."/>
            <person name="Evangelista C.C."/>
            <person name="Ferraz C."/>
            <person name="Ferriera S."/>
            <person name="Fleischmann W."/>
            <person name="Fosler C."/>
            <person name="Gabrielian A.E."/>
            <person name="Garg N.S."/>
            <person name="Gelbart W.M."/>
            <person name="Glasser K."/>
            <person name="Glodek A."/>
            <person name="Gong F."/>
            <person name="Gorrell J.H."/>
            <person name="Gu Z."/>
            <person name="Guan P."/>
            <person name="Harris M."/>
            <person name="Harris N.L."/>
            <person name="Harvey D.A."/>
            <person name="Heiman T.J."/>
            <person name="Hernandez J.R."/>
            <person name="Houck J."/>
            <person name="Hostin D."/>
            <person name="Houston K.A."/>
            <person name="Howland T.J."/>
            <person name="Wei M.-H."/>
            <person name="Ibegwam C."/>
            <person name="Jalali M."/>
            <person name="Kalush F."/>
            <person name="Karpen G.H."/>
            <person name="Ke Z."/>
            <person name="Kennison J.A."/>
            <person name="Ketchum K.A."/>
            <person name="Kimmel B.E."/>
            <person name="Kodira C.D."/>
            <person name="Kraft C.L."/>
            <person name="Kravitz S."/>
            <person name="Kulp D."/>
            <person name="Lai Z."/>
            <person name="Lasko P."/>
            <person name="Lei Y."/>
            <person name="Levitsky A.A."/>
            <person name="Li J.H."/>
            <person name="Li Z."/>
            <person name="Liang Y."/>
            <person name="Lin X."/>
            <person name="Liu X."/>
            <person name="Mattei B."/>
            <person name="McIntosh T.C."/>
            <person name="McLeod M.P."/>
            <person name="McPherson D."/>
            <person name="Merkulov G."/>
            <person name="Milshina N.V."/>
            <person name="Mobarry C."/>
            <person name="Morris J."/>
            <person name="Moshrefi A."/>
            <person name="Mount S.M."/>
            <person name="Moy M."/>
            <person name="Murphy B."/>
            <person name="Murphy L."/>
            <person name="Muzny D.M."/>
            <person name="Nelson D.L."/>
            <person name="Nelson D.R."/>
            <person name="Nelson K.A."/>
            <person name="Nixon K."/>
            <person name="Nusskern D.R."/>
            <person name="Pacleb J.M."/>
            <person name="Palazzolo M."/>
            <person name="Pittman G.S."/>
            <person name="Pan S."/>
            <person name="Pollard J."/>
            <person name="Puri V."/>
            <person name="Reese M.G."/>
            <person name="Reinert K."/>
            <person name="Remington K."/>
            <person name="Saunders R.D.C."/>
            <person name="Scheeler F."/>
            <person name="Shen H."/>
            <person name="Shue B.C."/>
            <person name="Siden-Kiamos I."/>
            <person name="Simpson M."/>
            <person name="Skupski M.P."/>
            <person name="Smith T.J."/>
            <person name="Spier E."/>
            <person name="Spradling A.C."/>
            <person name="Stapleton M."/>
            <person name="Strong R."/>
            <person name="Sun E."/>
            <person name="Svirskas R."/>
            <person name="Tector C."/>
            <person name="Turner R."/>
            <person name="Venter E."/>
            <person name="Wang A.H."/>
            <person name="Wang X."/>
            <person name="Wang Z.-Y."/>
            <person name="Wassarman D.A."/>
            <person name="Weinstock G.M."/>
            <person name="Weissenbach J."/>
            <person name="Williams S.M."/>
            <person name="Woodage T."/>
            <person name="Worley K.C."/>
            <person name="Wu D."/>
            <person name="Yang S."/>
            <person name="Yao Q.A."/>
            <person name="Ye J."/>
            <person name="Yeh R.-F."/>
            <person name="Zaveri J.S."/>
            <person name="Zhan M."/>
            <person name="Zhang G."/>
            <person name="Zhao Q."/>
            <person name="Zheng L."/>
            <person name="Zheng X.H."/>
            <person name="Zhong F.N."/>
            <person name="Zhong W."/>
            <person name="Zhou X."/>
            <person name="Zhu S.C."/>
            <person name="Zhu X."/>
            <person name="Smith H.O."/>
            <person name="Gibbs R.A."/>
            <person name="Myers E.W."/>
            <person name="Rubin G.M."/>
            <person name="Venter J.C."/>
        </authorList>
    </citation>
    <scope>NUCLEOTIDE SEQUENCE [LARGE SCALE GENOMIC DNA]</scope>
    <source>
        <strain>Berkeley</strain>
    </source>
</reference>
<reference key="4">
    <citation type="journal article" date="2002" name="Genome Biol.">
        <title>Annotation of the Drosophila melanogaster euchromatic genome: a systematic review.</title>
        <authorList>
            <person name="Misra S."/>
            <person name="Crosby M.A."/>
            <person name="Mungall C.J."/>
            <person name="Matthews B.B."/>
            <person name="Campbell K.S."/>
            <person name="Hradecky P."/>
            <person name="Huang Y."/>
            <person name="Kaminker J.S."/>
            <person name="Millburn G.H."/>
            <person name="Prochnik S.E."/>
            <person name="Smith C.D."/>
            <person name="Tupy J.L."/>
            <person name="Whitfield E.J."/>
            <person name="Bayraktaroglu L."/>
            <person name="Berman B.P."/>
            <person name="Bettencourt B.R."/>
            <person name="Celniker S.E."/>
            <person name="de Grey A.D.N.J."/>
            <person name="Drysdale R.A."/>
            <person name="Harris N.L."/>
            <person name="Richter J."/>
            <person name="Russo S."/>
            <person name="Schroeder A.J."/>
            <person name="Shu S.Q."/>
            <person name="Stapleton M."/>
            <person name="Yamada C."/>
            <person name="Ashburner M."/>
            <person name="Gelbart W.M."/>
            <person name="Rubin G.M."/>
            <person name="Lewis S.E."/>
        </authorList>
    </citation>
    <scope>GENOME REANNOTATION</scope>
    <scope>ALTERNATIVE SPLICING</scope>
    <source>
        <strain>Berkeley</strain>
    </source>
</reference>
<reference key="5">
    <citation type="journal article" date="2002" name="Genome Biol.">
        <title>A Drosophila full-length cDNA resource.</title>
        <authorList>
            <person name="Stapleton M."/>
            <person name="Carlson J.W."/>
            <person name="Brokstein P."/>
            <person name="Yu C."/>
            <person name="Champe M."/>
            <person name="George R.A."/>
            <person name="Guarin H."/>
            <person name="Kronmiller B."/>
            <person name="Pacleb J.M."/>
            <person name="Park S."/>
            <person name="Wan K.H."/>
            <person name="Rubin G.M."/>
            <person name="Celniker S.E."/>
        </authorList>
    </citation>
    <scope>NUCLEOTIDE SEQUENCE [LARGE SCALE MRNA] (ISOFORM 2)</scope>
    <source>
        <strain>Berkeley</strain>
        <tissue>Embryo</tissue>
    </source>
</reference>
<name>FUR11_DROME</name>
<evidence type="ECO:0000250" key="1"/>
<evidence type="ECO:0000255" key="2"/>
<evidence type="ECO:0000255" key="3">
    <source>
        <dbReference type="PROSITE-ProRule" id="PRU01173"/>
    </source>
</evidence>
<evidence type="ECO:0000255" key="4">
    <source>
        <dbReference type="PROSITE-ProRule" id="PRU01240"/>
    </source>
</evidence>
<evidence type="ECO:0000256" key="5">
    <source>
        <dbReference type="SAM" id="MobiDB-lite"/>
    </source>
</evidence>
<evidence type="ECO:0000269" key="6">
    <source>
    </source>
</evidence>
<evidence type="ECO:0000303" key="7">
    <source>
    </source>
</evidence>
<evidence type="ECO:0000303" key="8">
    <source>
    </source>
</evidence>
<evidence type="ECO:0000305" key="9"/>
<accession>P26016</accession>
<accession>A4V3E2</accession>
<accession>Q05817</accession>
<accession>Q27436</accession>
<proteinExistence type="evidence at transcript level"/>
<gene>
    <name type="primary">Fur1</name>
    <name type="ORF">CG10772</name>
</gene>
<dbReference type="EC" id="3.4.21.75"/>
<dbReference type="EMBL" id="X59384">
    <property type="protein sequence ID" value="CAA42027.1"/>
    <property type="molecule type" value="mRNA"/>
</dbReference>
<dbReference type="EMBL" id="L12370">
    <property type="protein sequence ID" value="AAA28546.1"/>
    <property type="molecule type" value="Genomic_DNA"/>
</dbReference>
<dbReference type="EMBL" id="L12369">
    <property type="protein sequence ID" value="AAA28546.1"/>
    <property type="status" value="JOINED"/>
    <property type="molecule type" value="Genomic_DNA"/>
</dbReference>
<dbReference type="EMBL" id="L12370">
    <property type="protein sequence ID" value="AAA28547.1"/>
    <property type="molecule type" value="Genomic_DNA"/>
</dbReference>
<dbReference type="EMBL" id="L12369">
    <property type="protein sequence ID" value="AAA28547.1"/>
    <property type="status" value="JOINED"/>
    <property type="molecule type" value="Genomic_DNA"/>
</dbReference>
<dbReference type="EMBL" id="L12375">
    <property type="protein sequence ID" value="AAA28550.1"/>
    <property type="molecule type" value="mRNA"/>
</dbReference>
<dbReference type="EMBL" id="L12376">
    <property type="protein sequence ID" value="AAA28549.1"/>
    <property type="molecule type" value="mRNA"/>
</dbReference>
<dbReference type="EMBL" id="AE014297">
    <property type="protein sequence ID" value="AAF56463.2"/>
    <property type="molecule type" value="Genomic_DNA"/>
</dbReference>
<dbReference type="EMBL" id="AE014297">
    <property type="protein sequence ID" value="AAF56464.1"/>
    <property type="molecule type" value="Genomic_DNA"/>
</dbReference>
<dbReference type="EMBL" id="AE014297">
    <property type="protein sequence ID" value="AAN14052.1"/>
    <property type="molecule type" value="Genomic_DNA"/>
</dbReference>
<dbReference type="EMBL" id="AE014297">
    <property type="protein sequence ID" value="AAS65215.1"/>
    <property type="molecule type" value="Genomic_DNA"/>
</dbReference>
<dbReference type="EMBL" id="AE014297">
    <property type="protein sequence ID" value="AAS65216.1"/>
    <property type="molecule type" value="Genomic_DNA"/>
</dbReference>
<dbReference type="EMBL" id="AY069590">
    <property type="protein sequence ID" value="AAL39735.1"/>
    <property type="molecule type" value="mRNA"/>
</dbReference>
<dbReference type="PIR" id="S17546">
    <property type="entry name" value="S17546"/>
</dbReference>
<dbReference type="PIR" id="S35366">
    <property type="entry name" value="S35366"/>
</dbReference>
<dbReference type="RefSeq" id="NP_524885.1">
    <molecule id="P26016-1"/>
    <property type="nucleotide sequence ID" value="NM_080146.3"/>
</dbReference>
<dbReference type="RefSeq" id="NP_733103.1">
    <molecule id="P26016-3"/>
    <property type="nucleotide sequence ID" value="NM_170655.2"/>
</dbReference>
<dbReference type="RefSeq" id="NP_733104.1">
    <molecule id="P26016-3"/>
    <property type="nucleotide sequence ID" value="NM_170656.2"/>
</dbReference>
<dbReference type="RefSeq" id="NP_996293.1">
    <molecule id="P26016-3"/>
    <property type="nucleotide sequence ID" value="NM_206570.2"/>
</dbReference>
<dbReference type="RefSeq" id="NP_996294.2">
    <molecule id="P26016-3"/>
    <property type="nucleotide sequence ID" value="NM_206571.2"/>
</dbReference>
<dbReference type="SMR" id="P26016"/>
<dbReference type="BioGRID" id="70692">
    <property type="interactions" value="6"/>
</dbReference>
<dbReference type="FunCoup" id="P26016">
    <property type="interactions" value="74"/>
</dbReference>
<dbReference type="IntAct" id="P26016">
    <property type="interactions" value="6"/>
</dbReference>
<dbReference type="STRING" id="7227.FBpp0307777"/>
<dbReference type="MEROPS" id="S08.048"/>
<dbReference type="GlyCosmos" id="P26016">
    <property type="glycosylation" value="13 sites, No reported glycans"/>
</dbReference>
<dbReference type="GlyGen" id="P26016">
    <property type="glycosylation" value="13 sites"/>
</dbReference>
<dbReference type="PaxDb" id="7227-FBpp0089026"/>
<dbReference type="DNASU" id="47220"/>
<dbReference type="EnsemblMetazoa" id="FBtr0089983">
    <molecule id="P26016-1"/>
    <property type="protein sequence ID" value="FBpp0089026"/>
    <property type="gene ID" value="FBgn0004509"/>
</dbReference>
<dbReference type="EnsemblMetazoa" id="FBtr0089984">
    <molecule id="P26016-3"/>
    <property type="protein sequence ID" value="FBpp0089027"/>
    <property type="gene ID" value="FBgn0004509"/>
</dbReference>
<dbReference type="EnsemblMetazoa" id="FBtr0089985">
    <molecule id="P26016-3"/>
    <property type="protein sequence ID" value="FBpp0089028"/>
    <property type="gene ID" value="FBgn0004509"/>
</dbReference>
<dbReference type="EnsemblMetazoa" id="FBtr0089987">
    <molecule id="P26016-3"/>
    <property type="protein sequence ID" value="FBpp0089030"/>
    <property type="gene ID" value="FBgn0004509"/>
</dbReference>
<dbReference type="EnsemblMetazoa" id="FBtr0336805">
    <molecule id="P26016-3"/>
    <property type="protein sequence ID" value="FBpp0307776"/>
    <property type="gene ID" value="FBgn0004509"/>
</dbReference>
<dbReference type="GeneID" id="47220"/>
<dbReference type="KEGG" id="dme:Dmel_CG10772"/>
<dbReference type="AGR" id="FB:FBgn0004509"/>
<dbReference type="CTD" id="47220"/>
<dbReference type="FlyBase" id="FBgn0004509">
    <property type="gene designation" value="Fur1"/>
</dbReference>
<dbReference type="VEuPathDB" id="VectorBase:FBgn0004509"/>
<dbReference type="eggNOG" id="KOG3525">
    <property type="taxonomic scope" value="Eukaryota"/>
</dbReference>
<dbReference type="HOGENOM" id="CLU_002976_0_3_1"/>
<dbReference type="InParanoid" id="P26016"/>
<dbReference type="OrthoDB" id="300641at2759"/>
<dbReference type="PhylomeDB" id="P26016"/>
<dbReference type="BRENDA" id="3.4.21.75">
    <property type="organism ID" value="1994"/>
</dbReference>
<dbReference type="Reactome" id="R-DME-1592389">
    <property type="pathway name" value="Activation of Matrix Metalloproteinases"/>
</dbReference>
<dbReference type="Reactome" id="R-DME-186797">
    <property type="pathway name" value="Signaling by PDGF"/>
</dbReference>
<dbReference type="Reactome" id="R-DME-2173789">
    <property type="pathway name" value="TGF-beta receptor signaling activates SMADs"/>
</dbReference>
<dbReference type="Reactome" id="R-DME-2173796">
    <property type="pathway name" value="SMAD2/SMAD3:SMAD4 heterotrimer regulates transcription"/>
</dbReference>
<dbReference type="Reactome" id="R-DME-8963889">
    <property type="pathway name" value="Assembly of active LPL and LIPC lipase complexes"/>
</dbReference>
<dbReference type="BioGRID-ORCS" id="47220">
    <property type="hits" value="0 hits in 3 CRISPR screens"/>
</dbReference>
<dbReference type="ChiTaRS" id="Fur1">
    <property type="organism name" value="fly"/>
</dbReference>
<dbReference type="GenomeRNAi" id="47220"/>
<dbReference type="Proteomes" id="UP000000803">
    <property type="component" value="Chromosome 3R"/>
</dbReference>
<dbReference type="Bgee" id="FBgn0004509">
    <property type="expression patterns" value="Expressed in columnar neuron T1 (Drosophila) in insect head and 291 other cell types or tissues"/>
</dbReference>
<dbReference type="ExpressionAtlas" id="P26016">
    <property type="expression patterns" value="baseline and differential"/>
</dbReference>
<dbReference type="GO" id="GO:0000139">
    <property type="term" value="C:Golgi membrane"/>
    <property type="evidence" value="ECO:0000318"/>
    <property type="project" value="GO_Central"/>
</dbReference>
<dbReference type="GO" id="GO:0005886">
    <property type="term" value="C:plasma membrane"/>
    <property type="evidence" value="ECO:0000314"/>
    <property type="project" value="FlyBase"/>
</dbReference>
<dbReference type="GO" id="GO:0005802">
    <property type="term" value="C:trans-Golgi network"/>
    <property type="evidence" value="ECO:0000318"/>
    <property type="project" value="GO_Central"/>
</dbReference>
<dbReference type="GO" id="GO:0004252">
    <property type="term" value="F:serine-type endopeptidase activity"/>
    <property type="evidence" value="ECO:0000314"/>
    <property type="project" value="FlyBase"/>
</dbReference>
<dbReference type="GO" id="GO:0097688">
    <property type="term" value="P:glutamate receptor clustering"/>
    <property type="evidence" value="ECO:0000315"/>
    <property type="project" value="FlyBase"/>
</dbReference>
<dbReference type="GO" id="GO:0016486">
    <property type="term" value="P:peptide hormone processing"/>
    <property type="evidence" value="ECO:0000318"/>
    <property type="project" value="GO_Central"/>
</dbReference>
<dbReference type="GO" id="GO:0001941">
    <property type="term" value="P:postsynaptic membrane organization"/>
    <property type="evidence" value="ECO:0000315"/>
    <property type="project" value="FlyBase"/>
</dbReference>
<dbReference type="GO" id="GO:0097090">
    <property type="term" value="P:presynaptic membrane organization"/>
    <property type="evidence" value="ECO:0000315"/>
    <property type="project" value="FlyBase"/>
</dbReference>
<dbReference type="GO" id="GO:0008039">
    <property type="term" value="P:synaptic target recognition"/>
    <property type="evidence" value="ECO:0000315"/>
    <property type="project" value="FlyBase"/>
</dbReference>
<dbReference type="CDD" id="cd04059">
    <property type="entry name" value="Peptidases_S8_Protein_convertases_Kexins_Furin-like"/>
    <property type="match status" value="1"/>
</dbReference>
<dbReference type="FunFam" id="3.40.50.200:FF:000001">
    <property type="entry name" value="Furin 2, isoform B"/>
    <property type="match status" value="1"/>
</dbReference>
<dbReference type="FunFam" id="2.60.120.260:FF:000006">
    <property type="entry name" value="Proprotein convertase subtilisin/kexin type 5"/>
    <property type="match status" value="1"/>
</dbReference>
<dbReference type="FunFam" id="3.30.70.850:FF:000001">
    <property type="entry name" value="Proprotein convertase subtilisin/kexin type 5"/>
    <property type="match status" value="1"/>
</dbReference>
<dbReference type="Gene3D" id="2.60.120.260">
    <property type="entry name" value="Galactose-binding domain-like"/>
    <property type="match status" value="1"/>
</dbReference>
<dbReference type="Gene3D" id="3.30.70.850">
    <property type="entry name" value="Peptidase S8, pro-domain"/>
    <property type="match status" value="1"/>
</dbReference>
<dbReference type="Gene3D" id="3.40.50.200">
    <property type="entry name" value="Peptidase S8/S53 domain"/>
    <property type="match status" value="1"/>
</dbReference>
<dbReference type="InterPro" id="IPR008979">
    <property type="entry name" value="Galactose-bd-like_sf"/>
</dbReference>
<dbReference type="InterPro" id="IPR034182">
    <property type="entry name" value="Kexin/furin"/>
</dbReference>
<dbReference type="InterPro" id="IPR002884">
    <property type="entry name" value="P_dom"/>
</dbReference>
<dbReference type="InterPro" id="IPR000209">
    <property type="entry name" value="Peptidase_S8/S53_dom"/>
</dbReference>
<dbReference type="InterPro" id="IPR036852">
    <property type="entry name" value="Peptidase_S8/S53_dom_sf"/>
</dbReference>
<dbReference type="InterPro" id="IPR023827">
    <property type="entry name" value="Peptidase_S8_Asp-AS"/>
</dbReference>
<dbReference type="InterPro" id="IPR022398">
    <property type="entry name" value="Peptidase_S8_His-AS"/>
</dbReference>
<dbReference type="InterPro" id="IPR023828">
    <property type="entry name" value="Peptidase_S8_Ser-AS"/>
</dbReference>
<dbReference type="InterPro" id="IPR015500">
    <property type="entry name" value="Peptidase_S8_subtilisin-rel"/>
</dbReference>
<dbReference type="InterPro" id="IPR032815">
    <property type="entry name" value="S8_pro-domain"/>
</dbReference>
<dbReference type="InterPro" id="IPR038466">
    <property type="entry name" value="S8_pro-domain_sf"/>
</dbReference>
<dbReference type="PANTHER" id="PTHR42884:SF3">
    <property type="entry name" value="FURIN-LIKE PROTEASE 1, ISOFORMS 1_1-X_2"/>
    <property type="match status" value="1"/>
</dbReference>
<dbReference type="PANTHER" id="PTHR42884">
    <property type="entry name" value="PROPROTEIN CONVERTASE SUBTILISIN/KEXIN-RELATED"/>
    <property type="match status" value="1"/>
</dbReference>
<dbReference type="Pfam" id="PF01483">
    <property type="entry name" value="P_proprotein"/>
    <property type="match status" value="1"/>
</dbReference>
<dbReference type="Pfam" id="PF00082">
    <property type="entry name" value="Peptidase_S8"/>
    <property type="match status" value="1"/>
</dbReference>
<dbReference type="Pfam" id="PF16470">
    <property type="entry name" value="S8_pro-domain"/>
    <property type="match status" value="1"/>
</dbReference>
<dbReference type="PRINTS" id="PR00723">
    <property type="entry name" value="SUBTILISIN"/>
</dbReference>
<dbReference type="SUPFAM" id="SSF49785">
    <property type="entry name" value="Galactose-binding domain-like"/>
    <property type="match status" value="1"/>
</dbReference>
<dbReference type="SUPFAM" id="SSF54897">
    <property type="entry name" value="Protease propeptides/inhibitors"/>
    <property type="match status" value="1"/>
</dbReference>
<dbReference type="SUPFAM" id="SSF52743">
    <property type="entry name" value="Subtilisin-like"/>
    <property type="match status" value="1"/>
</dbReference>
<dbReference type="PROSITE" id="PS51829">
    <property type="entry name" value="P_HOMO_B"/>
    <property type="match status" value="1"/>
</dbReference>
<dbReference type="PROSITE" id="PS51892">
    <property type="entry name" value="SUBTILASE"/>
    <property type="match status" value="1"/>
</dbReference>
<dbReference type="PROSITE" id="PS00136">
    <property type="entry name" value="SUBTILASE_ASP"/>
    <property type="match status" value="1"/>
</dbReference>
<dbReference type="PROSITE" id="PS00137">
    <property type="entry name" value="SUBTILASE_HIS"/>
    <property type="match status" value="1"/>
</dbReference>
<dbReference type="PROSITE" id="PS00138">
    <property type="entry name" value="SUBTILASE_SER"/>
    <property type="match status" value="1"/>
</dbReference>
<sequence>MKNDVVRWSRQPTSNTTNSSSSSRSDSNSTHKHRSKSNKLNARQLGSNAARSCQQRSSVATTLEDEQQTIIECDIGNFNFDCNLFKTSFLTQHKQKRSGKSSSKSKSNRSRPLAKTKAVFLLALQFSAVVFLCNINVGFVAGSVATAASSAGGSSPAAPSSAPSSPPTVAVPPPPPPSSALKVDPNGQSPVLPPYVLDYETGGKAKLTPNNGKFGQSGSSGSNNNHIVGHYTHTWAVHIPNGDNGMADAVAKDHGFVNLGKIFDDHYHFAHHKVSKRSLSPATHHQTRLDDDDRVHWAKQQRAKSRSKRDFIRMRPSRTSSRAMSMVDAMSFNDSKWPQMWYLNRGGGLDMNVIPAWKMGITGKGVVVTILDDGLESDHPDIQDNYDPKASYDVNSHDDDPMPHYDMTDSNRHGTRCAGEVAATANNSFCAVGIAYGASVGGVRMLDGDVTDAVEARSLSLNPQHIDIYSASWGPDDDGKTVDGPGELASRAFIEGTTKGRGGKGSIFIWASGNGGREQDNCNCDGYTNSIWTLSISSATEEGHVPWYSEKCSSTLATTYSSGGQGEKQVVTTDLHHSCTVSHTGTSASAPLAAGIAALVLQSNQNLTWRDLQHIVVRTAKPANLKDPSWSRNGVGRRVSHSFGYGLMDAAEMVRVARNWKAVPEQQRCEINAPHVDKVIPPRTHITLQLTVNHCRSVNYLEHVQAKITLTSQRRGDIQLFLRSPANTSVTLLTPRIHDNSRSGFNQWPFMSVHTWGESPQGNWQLEIHNEGRYMGHALLREWSLIFYGTTQSIGPNDPISVPKPSGSEATTPNSSSTTSNLHQAYSPQYPRIPPNNFGSSPSGGSKLPLGKVPPPNKSSYVTNNPLLNSAPPKQGYQQISATYGVILGKANGKSNNNSKEKTNNKGNKSNNGNKGKSGGSSGNRKEQTTQSTIIQTSTSKNKYYRISQQQQQKNNKQDRNGVQTQRPKANSGEKSYDEKSRKVVGEITTNSGNGSIKAAKQVKESTTTSSNSRIPKLFERYEKIQAIFPELEPYENSSPKGKPKQAKQGKQFEVDLFKPTNGGNSRQGNTKKSPSVPPPSQTMATLSILPILPAGGSSFLPDQKILKKQQLLMAAAGVMAPAQVEVEMEEVHATPDYEARKDQRKEVNGPNAQITQWDMIFYGTETPAQPDDVANPSQSNQFNLYGNDMAHNDVEYDSTGQWRNMQQVGEVGMTRDHSNTAACLKWSDRKCLGLSLLFFMIMQVFFLNFKHANDNNNKNKNNIIKCIR</sequence>
<feature type="signal peptide" evidence="2">
    <location>
        <begin position="1"/>
        <end status="unknown"/>
    </location>
</feature>
<feature type="propeptide" id="PRO_0000027020" evidence="2">
    <location>
        <begin status="unknown"/>
        <end position="309"/>
    </location>
</feature>
<feature type="chain" id="PRO_0000027021" description="Furin-like protease 1, isoforms 1/1-X/2">
    <location>
        <begin position="310"/>
        <end position="1269"/>
    </location>
</feature>
<feature type="transmembrane region" description="Helical" evidence="2">
    <location>
        <begin position="119"/>
        <end position="139"/>
    </location>
</feature>
<feature type="transmembrane region" description="Helical" evidence="2">
    <location>
        <begin position="1233"/>
        <end position="1253"/>
    </location>
</feature>
<feature type="domain" description="Peptidase S8" evidence="4">
    <location>
        <begin position="340"/>
        <end position="654"/>
    </location>
</feature>
<feature type="domain" description="P/Homo B" evidence="3">
    <location>
        <begin position="662"/>
        <end position="793"/>
    </location>
</feature>
<feature type="region of interest" description="Disordered" evidence="5">
    <location>
        <begin position="1"/>
        <end position="57"/>
    </location>
</feature>
<feature type="region of interest" description="Disordered" evidence="5">
    <location>
        <begin position="150"/>
        <end position="187"/>
    </location>
</feature>
<feature type="region of interest" description="Disordered" evidence="5">
    <location>
        <begin position="796"/>
        <end position="875"/>
    </location>
</feature>
<feature type="region of interest" description="Disordered" evidence="5">
    <location>
        <begin position="891"/>
        <end position="1015"/>
    </location>
</feature>
<feature type="region of interest" description="Disordered" evidence="5">
    <location>
        <begin position="1031"/>
        <end position="1050"/>
    </location>
</feature>
<feature type="region of interest" description="Disordered" evidence="5">
    <location>
        <begin position="1057"/>
        <end position="1083"/>
    </location>
</feature>
<feature type="compositionally biased region" description="Low complexity" evidence="5">
    <location>
        <begin position="13"/>
        <end position="28"/>
    </location>
</feature>
<feature type="compositionally biased region" description="Polar residues" evidence="5">
    <location>
        <begin position="38"/>
        <end position="57"/>
    </location>
</feature>
<feature type="compositionally biased region" description="Low complexity" evidence="5">
    <location>
        <begin position="150"/>
        <end position="163"/>
    </location>
</feature>
<feature type="compositionally biased region" description="Pro residues" evidence="5">
    <location>
        <begin position="164"/>
        <end position="178"/>
    </location>
</feature>
<feature type="compositionally biased region" description="Low complexity" evidence="5">
    <location>
        <begin position="811"/>
        <end position="821"/>
    </location>
</feature>
<feature type="compositionally biased region" description="Low complexity" evidence="5">
    <location>
        <begin position="835"/>
        <end position="851"/>
    </location>
</feature>
<feature type="compositionally biased region" description="Polar residues" evidence="5">
    <location>
        <begin position="858"/>
        <end position="868"/>
    </location>
</feature>
<feature type="compositionally biased region" description="Low complexity" evidence="5">
    <location>
        <begin position="905"/>
        <end position="915"/>
    </location>
</feature>
<feature type="compositionally biased region" description="Low complexity" evidence="5">
    <location>
        <begin position="929"/>
        <end position="940"/>
    </location>
</feature>
<feature type="compositionally biased region" description="Basic and acidic residues" evidence="5">
    <location>
        <begin position="975"/>
        <end position="985"/>
    </location>
</feature>
<feature type="compositionally biased region" description="Polar residues" evidence="5">
    <location>
        <begin position="1005"/>
        <end position="1014"/>
    </location>
</feature>
<feature type="compositionally biased region" description="Polar residues" evidence="5">
    <location>
        <begin position="1062"/>
        <end position="1074"/>
    </location>
</feature>
<feature type="active site" description="Charge relay system" evidence="4">
    <location>
        <position position="372"/>
    </location>
</feature>
<feature type="active site" description="Charge relay system" evidence="4">
    <location>
        <position position="413"/>
    </location>
</feature>
<feature type="active site" description="Charge relay system" evidence="4">
    <location>
        <position position="587"/>
    </location>
</feature>
<feature type="glycosylation site" description="N-linked (GlcNAc...) asparagine" evidence="2">
    <location>
        <position position="15"/>
    </location>
</feature>
<feature type="glycosylation site" description="N-linked (GlcNAc...) asparagine" evidence="2">
    <location>
        <position position="18"/>
    </location>
</feature>
<feature type="glycosylation site" description="N-linked (GlcNAc...) asparagine" evidence="2">
    <location>
        <position position="28"/>
    </location>
</feature>
<feature type="glycosylation site" description="N-linked (GlcNAc...) asparagine" evidence="2">
    <location>
        <position position="108"/>
    </location>
</feature>
<feature type="glycosylation site" description="N-linked (GlcNAc...) asparagine" evidence="2">
    <location>
        <position position="333"/>
    </location>
</feature>
<feature type="glycosylation site" description="N-linked (GlcNAc...) asparagine" evidence="2">
    <location>
        <position position="426"/>
    </location>
</feature>
<feature type="glycosylation site" description="N-linked (GlcNAc...) asparagine" evidence="2">
    <location>
        <position position="606"/>
    </location>
</feature>
<feature type="glycosylation site" description="N-linked (GlcNAc...) asparagine" evidence="2">
    <location>
        <position position="727"/>
    </location>
</feature>
<feature type="glycosylation site" description="N-linked (GlcNAc...) asparagine" evidence="2">
    <location>
        <position position="814"/>
    </location>
</feature>
<feature type="glycosylation site" description="N-linked (GlcNAc...) asparagine" evidence="2">
    <location>
        <position position="857"/>
    </location>
</feature>
<feature type="glycosylation site" description="N-linked (GlcNAc...) asparagine" evidence="2">
    <location>
        <position position="897"/>
    </location>
</feature>
<feature type="glycosylation site" description="N-linked (GlcNAc...) asparagine" evidence="2">
    <location>
        <position position="908"/>
    </location>
</feature>
<feature type="glycosylation site" description="N-linked (GlcNAc...) asparagine" evidence="2">
    <location>
        <position position="994"/>
    </location>
</feature>
<feature type="disulfide bond" evidence="1">
    <location>
        <begin position="430"/>
        <end position="579"/>
    </location>
</feature>
<feature type="disulfide bond" evidence="1">
    <location>
        <begin position="522"/>
        <end position="552"/>
    </location>
</feature>
<feature type="disulfide bond" evidence="1">
    <location>
        <begin position="669"/>
        <end position="695"/>
    </location>
</feature>
<feature type="splice variant" id="VSP_005424" description="In isoform 1 and isoform 2." evidence="7 8">
    <location>
        <begin position="776"/>
        <end position="1152"/>
    </location>
</feature>
<feature type="splice variant" id="VSP_008042" description="In isoform 1." evidence="8">
    <original>Q</original>
    <variation>QQYPFPFQ</variation>
    <location>
        <position position="1208"/>
    </location>
</feature>